<evidence type="ECO:0000255" key="1">
    <source>
        <dbReference type="HAMAP-Rule" id="MF_01342"/>
    </source>
</evidence>
<evidence type="ECO:0000256" key="2">
    <source>
        <dbReference type="SAM" id="MobiDB-lite"/>
    </source>
</evidence>
<evidence type="ECO:0000305" key="3"/>
<sequence length="138" mass="15537">MLSPRKVKYRKKQRGRLSGEAQKGNKISFGEYGLVSLEADFITARQIEAARVAMTRRVKRGGKVWIRIFPDIPYTKKPAETRMGKGKGGVDHWNAPVKLGTVMFEMSGVPRELAESAMMLASSKLPVKTTFVVRRDLR</sequence>
<name>RL16_BORDL</name>
<keyword id="KW-0687">Ribonucleoprotein</keyword>
<keyword id="KW-0689">Ribosomal protein</keyword>
<keyword id="KW-0694">RNA-binding</keyword>
<keyword id="KW-0699">rRNA-binding</keyword>
<keyword id="KW-0820">tRNA-binding</keyword>
<gene>
    <name evidence="1" type="primary">rplP</name>
    <name type="ordered locus">BDU_488</name>
</gene>
<dbReference type="EMBL" id="CP000976">
    <property type="protein sequence ID" value="ACH93429.1"/>
    <property type="molecule type" value="Genomic_DNA"/>
</dbReference>
<dbReference type="RefSeq" id="WP_012538239.1">
    <property type="nucleotide sequence ID" value="NC_011229.1"/>
</dbReference>
<dbReference type="SMR" id="B5RM43"/>
<dbReference type="STRING" id="412419.BDU_488"/>
<dbReference type="KEGG" id="bdu:BDU_488"/>
<dbReference type="eggNOG" id="COG0197">
    <property type="taxonomic scope" value="Bacteria"/>
</dbReference>
<dbReference type="HOGENOM" id="CLU_078858_2_1_12"/>
<dbReference type="OrthoDB" id="9802589at2"/>
<dbReference type="Proteomes" id="UP000000611">
    <property type="component" value="Chromosome"/>
</dbReference>
<dbReference type="GO" id="GO:0022625">
    <property type="term" value="C:cytosolic large ribosomal subunit"/>
    <property type="evidence" value="ECO:0007669"/>
    <property type="project" value="TreeGrafter"/>
</dbReference>
<dbReference type="GO" id="GO:0019843">
    <property type="term" value="F:rRNA binding"/>
    <property type="evidence" value="ECO:0007669"/>
    <property type="project" value="UniProtKB-UniRule"/>
</dbReference>
<dbReference type="GO" id="GO:0003735">
    <property type="term" value="F:structural constituent of ribosome"/>
    <property type="evidence" value="ECO:0007669"/>
    <property type="project" value="InterPro"/>
</dbReference>
<dbReference type="GO" id="GO:0000049">
    <property type="term" value="F:tRNA binding"/>
    <property type="evidence" value="ECO:0007669"/>
    <property type="project" value="UniProtKB-KW"/>
</dbReference>
<dbReference type="GO" id="GO:0006412">
    <property type="term" value="P:translation"/>
    <property type="evidence" value="ECO:0007669"/>
    <property type="project" value="UniProtKB-UniRule"/>
</dbReference>
<dbReference type="CDD" id="cd01433">
    <property type="entry name" value="Ribosomal_L16_L10e"/>
    <property type="match status" value="1"/>
</dbReference>
<dbReference type="FunFam" id="3.90.1170.10:FF:000001">
    <property type="entry name" value="50S ribosomal protein L16"/>
    <property type="match status" value="1"/>
</dbReference>
<dbReference type="Gene3D" id="3.90.1170.10">
    <property type="entry name" value="Ribosomal protein L10e/L16"/>
    <property type="match status" value="1"/>
</dbReference>
<dbReference type="HAMAP" id="MF_01342">
    <property type="entry name" value="Ribosomal_uL16"/>
    <property type="match status" value="1"/>
</dbReference>
<dbReference type="InterPro" id="IPR047873">
    <property type="entry name" value="Ribosomal_uL16"/>
</dbReference>
<dbReference type="InterPro" id="IPR000114">
    <property type="entry name" value="Ribosomal_uL16_bact-type"/>
</dbReference>
<dbReference type="InterPro" id="IPR020798">
    <property type="entry name" value="Ribosomal_uL16_CS"/>
</dbReference>
<dbReference type="InterPro" id="IPR016180">
    <property type="entry name" value="Ribosomal_uL16_dom"/>
</dbReference>
<dbReference type="InterPro" id="IPR036920">
    <property type="entry name" value="Ribosomal_uL16_sf"/>
</dbReference>
<dbReference type="NCBIfam" id="TIGR01164">
    <property type="entry name" value="rplP_bact"/>
    <property type="match status" value="1"/>
</dbReference>
<dbReference type="PANTHER" id="PTHR12220">
    <property type="entry name" value="50S/60S RIBOSOMAL PROTEIN L16"/>
    <property type="match status" value="1"/>
</dbReference>
<dbReference type="PANTHER" id="PTHR12220:SF13">
    <property type="entry name" value="LARGE RIBOSOMAL SUBUNIT PROTEIN UL16M"/>
    <property type="match status" value="1"/>
</dbReference>
<dbReference type="Pfam" id="PF00252">
    <property type="entry name" value="Ribosomal_L16"/>
    <property type="match status" value="1"/>
</dbReference>
<dbReference type="PRINTS" id="PR00060">
    <property type="entry name" value="RIBOSOMALL16"/>
</dbReference>
<dbReference type="SUPFAM" id="SSF54686">
    <property type="entry name" value="Ribosomal protein L16p/L10e"/>
    <property type="match status" value="1"/>
</dbReference>
<dbReference type="PROSITE" id="PS00586">
    <property type="entry name" value="RIBOSOMAL_L16_1"/>
    <property type="match status" value="1"/>
</dbReference>
<dbReference type="PROSITE" id="PS00701">
    <property type="entry name" value="RIBOSOMAL_L16_2"/>
    <property type="match status" value="1"/>
</dbReference>
<proteinExistence type="inferred from homology"/>
<feature type="chain" id="PRO_1000142930" description="Large ribosomal subunit protein uL16">
    <location>
        <begin position="1"/>
        <end position="138"/>
    </location>
</feature>
<feature type="region of interest" description="Disordered" evidence="2">
    <location>
        <begin position="1"/>
        <end position="21"/>
    </location>
</feature>
<feature type="compositionally biased region" description="Basic residues" evidence="2">
    <location>
        <begin position="1"/>
        <end position="15"/>
    </location>
</feature>
<accession>B5RM43</accession>
<comment type="function">
    <text evidence="1">Binds 23S rRNA and is also seen to make contacts with the A and possibly P site tRNAs.</text>
</comment>
<comment type="subunit">
    <text evidence="1">Part of the 50S ribosomal subunit.</text>
</comment>
<comment type="similarity">
    <text evidence="1">Belongs to the universal ribosomal protein uL16 family.</text>
</comment>
<reference key="1">
    <citation type="journal article" date="2008" name="PLoS Genet.">
        <title>The genome of Borrelia recurrentis, the agent of deadly louse-borne relapsing fever, is a degraded subset of tick-borne Borrelia duttonii.</title>
        <authorList>
            <person name="Lescot M."/>
            <person name="Audic S."/>
            <person name="Robert C."/>
            <person name="Nguyen T.T."/>
            <person name="Blanc G."/>
            <person name="Cutler S.J."/>
            <person name="Wincker P."/>
            <person name="Couloux A."/>
            <person name="Claverie J.-M."/>
            <person name="Raoult D."/>
            <person name="Drancourt M."/>
        </authorList>
    </citation>
    <scope>NUCLEOTIDE SEQUENCE [LARGE SCALE GENOMIC DNA]</scope>
    <source>
        <strain>Ly</strain>
    </source>
</reference>
<organism>
    <name type="scientific">Borrelia duttonii (strain Ly)</name>
    <dbReference type="NCBI Taxonomy" id="412419"/>
    <lineage>
        <taxon>Bacteria</taxon>
        <taxon>Pseudomonadati</taxon>
        <taxon>Spirochaetota</taxon>
        <taxon>Spirochaetia</taxon>
        <taxon>Spirochaetales</taxon>
        <taxon>Borreliaceae</taxon>
        <taxon>Borrelia</taxon>
    </lineage>
</organism>
<protein>
    <recommendedName>
        <fullName evidence="1">Large ribosomal subunit protein uL16</fullName>
    </recommendedName>
    <alternativeName>
        <fullName evidence="3">50S ribosomal protein L16</fullName>
    </alternativeName>
</protein>